<reference key="1">
    <citation type="journal article" date="2009" name="PLoS Genet.">
        <title>Organised genome dynamics in the Escherichia coli species results in highly diverse adaptive paths.</title>
        <authorList>
            <person name="Touchon M."/>
            <person name="Hoede C."/>
            <person name="Tenaillon O."/>
            <person name="Barbe V."/>
            <person name="Baeriswyl S."/>
            <person name="Bidet P."/>
            <person name="Bingen E."/>
            <person name="Bonacorsi S."/>
            <person name="Bouchier C."/>
            <person name="Bouvet O."/>
            <person name="Calteau A."/>
            <person name="Chiapello H."/>
            <person name="Clermont O."/>
            <person name="Cruveiller S."/>
            <person name="Danchin A."/>
            <person name="Diard M."/>
            <person name="Dossat C."/>
            <person name="Karoui M.E."/>
            <person name="Frapy E."/>
            <person name="Garry L."/>
            <person name="Ghigo J.M."/>
            <person name="Gilles A.M."/>
            <person name="Johnson J."/>
            <person name="Le Bouguenec C."/>
            <person name="Lescat M."/>
            <person name="Mangenot S."/>
            <person name="Martinez-Jehanne V."/>
            <person name="Matic I."/>
            <person name="Nassif X."/>
            <person name="Oztas S."/>
            <person name="Petit M.A."/>
            <person name="Pichon C."/>
            <person name="Rouy Z."/>
            <person name="Ruf C.S."/>
            <person name="Schneider D."/>
            <person name="Tourret J."/>
            <person name="Vacherie B."/>
            <person name="Vallenet D."/>
            <person name="Medigue C."/>
            <person name="Rocha E.P.C."/>
            <person name="Denamur E."/>
        </authorList>
    </citation>
    <scope>NUCLEOTIDE SEQUENCE [LARGE SCALE GENOMIC DNA]</scope>
    <source>
        <strain>IAI39 / ExPEC</strain>
    </source>
</reference>
<proteinExistence type="inferred from homology"/>
<gene>
    <name evidence="1" type="primary">mraZ</name>
    <name type="ordered locus">ECIAI39_0084</name>
</gene>
<accession>B7NHI7</accession>
<evidence type="ECO:0000255" key="1">
    <source>
        <dbReference type="HAMAP-Rule" id="MF_01008"/>
    </source>
</evidence>
<evidence type="ECO:0000255" key="2">
    <source>
        <dbReference type="PROSITE-ProRule" id="PRU01076"/>
    </source>
</evidence>
<keyword id="KW-0963">Cytoplasm</keyword>
<keyword id="KW-0238">DNA-binding</keyword>
<keyword id="KW-0677">Repeat</keyword>
<keyword id="KW-0678">Repressor</keyword>
<keyword id="KW-0804">Transcription</keyword>
<keyword id="KW-0805">Transcription regulation</keyword>
<name>MRAZ_ECO7I</name>
<sequence>MFRGATLVNLDSKGRLSVPTRYREQLLENAAGQMVCTIDIHHPCLLLYPLPEWEIIEQKLSRLSSMNPVERRVQRLLLGHASECQMDGAGRLLIAPVLRQHAGLTKEVMLVGQFNKFELWDETTWHQQVKEDIDAEQLATGDLSERLQDLSL</sequence>
<feature type="chain" id="PRO_1000134791" description="Transcriptional regulator MraZ">
    <location>
        <begin position="1"/>
        <end position="152"/>
    </location>
</feature>
<feature type="domain" description="SpoVT-AbrB 1" evidence="2">
    <location>
        <begin position="5"/>
        <end position="52"/>
    </location>
</feature>
<feature type="domain" description="SpoVT-AbrB 2" evidence="2">
    <location>
        <begin position="81"/>
        <end position="124"/>
    </location>
</feature>
<organism>
    <name type="scientific">Escherichia coli O7:K1 (strain IAI39 / ExPEC)</name>
    <dbReference type="NCBI Taxonomy" id="585057"/>
    <lineage>
        <taxon>Bacteria</taxon>
        <taxon>Pseudomonadati</taxon>
        <taxon>Pseudomonadota</taxon>
        <taxon>Gammaproteobacteria</taxon>
        <taxon>Enterobacterales</taxon>
        <taxon>Enterobacteriaceae</taxon>
        <taxon>Escherichia</taxon>
    </lineage>
</organism>
<protein>
    <recommendedName>
        <fullName>Transcriptional regulator MraZ</fullName>
    </recommendedName>
</protein>
<dbReference type="EMBL" id="CU928164">
    <property type="protein sequence ID" value="CAR16225.1"/>
    <property type="molecule type" value="Genomic_DNA"/>
</dbReference>
<dbReference type="RefSeq" id="WP_001295770.1">
    <property type="nucleotide sequence ID" value="NC_011750.1"/>
</dbReference>
<dbReference type="RefSeq" id="YP_002406133.1">
    <property type="nucleotide sequence ID" value="NC_011750.1"/>
</dbReference>
<dbReference type="SMR" id="B7NHI7"/>
<dbReference type="STRING" id="585057.ECIAI39_0084"/>
<dbReference type="GeneID" id="75202102"/>
<dbReference type="KEGG" id="ect:ECIAI39_0084"/>
<dbReference type="PATRIC" id="fig|585057.6.peg.93"/>
<dbReference type="HOGENOM" id="CLU_107907_2_0_6"/>
<dbReference type="Proteomes" id="UP000000749">
    <property type="component" value="Chromosome"/>
</dbReference>
<dbReference type="GO" id="GO:0005737">
    <property type="term" value="C:cytoplasm"/>
    <property type="evidence" value="ECO:0007669"/>
    <property type="project" value="UniProtKB-UniRule"/>
</dbReference>
<dbReference type="GO" id="GO:0009295">
    <property type="term" value="C:nucleoid"/>
    <property type="evidence" value="ECO:0007669"/>
    <property type="project" value="UniProtKB-SubCell"/>
</dbReference>
<dbReference type="GO" id="GO:0003700">
    <property type="term" value="F:DNA-binding transcription factor activity"/>
    <property type="evidence" value="ECO:0007669"/>
    <property type="project" value="UniProtKB-UniRule"/>
</dbReference>
<dbReference type="GO" id="GO:0000976">
    <property type="term" value="F:transcription cis-regulatory region binding"/>
    <property type="evidence" value="ECO:0007669"/>
    <property type="project" value="TreeGrafter"/>
</dbReference>
<dbReference type="GO" id="GO:2000143">
    <property type="term" value="P:negative regulation of DNA-templated transcription initiation"/>
    <property type="evidence" value="ECO:0007669"/>
    <property type="project" value="TreeGrafter"/>
</dbReference>
<dbReference type="CDD" id="cd16321">
    <property type="entry name" value="MraZ_C"/>
    <property type="match status" value="1"/>
</dbReference>
<dbReference type="CDD" id="cd16320">
    <property type="entry name" value="MraZ_N"/>
    <property type="match status" value="1"/>
</dbReference>
<dbReference type="FunFam" id="3.40.1550.20:FF:000001">
    <property type="entry name" value="Transcriptional regulator MraZ"/>
    <property type="match status" value="1"/>
</dbReference>
<dbReference type="Gene3D" id="3.40.1550.20">
    <property type="entry name" value="Transcriptional regulator MraZ domain"/>
    <property type="match status" value="1"/>
</dbReference>
<dbReference type="HAMAP" id="MF_01008">
    <property type="entry name" value="MraZ"/>
    <property type="match status" value="1"/>
</dbReference>
<dbReference type="InterPro" id="IPR003444">
    <property type="entry name" value="MraZ"/>
</dbReference>
<dbReference type="InterPro" id="IPR035644">
    <property type="entry name" value="MraZ_C"/>
</dbReference>
<dbReference type="InterPro" id="IPR020603">
    <property type="entry name" value="MraZ_dom"/>
</dbReference>
<dbReference type="InterPro" id="IPR035642">
    <property type="entry name" value="MraZ_N"/>
</dbReference>
<dbReference type="InterPro" id="IPR038619">
    <property type="entry name" value="MraZ_sf"/>
</dbReference>
<dbReference type="InterPro" id="IPR007159">
    <property type="entry name" value="SpoVT-AbrB_dom"/>
</dbReference>
<dbReference type="InterPro" id="IPR037914">
    <property type="entry name" value="SpoVT-AbrB_sf"/>
</dbReference>
<dbReference type="NCBIfam" id="TIGR00242">
    <property type="entry name" value="division/cell wall cluster transcriptional repressor MraZ"/>
    <property type="match status" value="1"/>
</dbReference>
<dbReference type="PANTHER" id="PTHR34701">
    <property type="entry name" value="TRANSCRIPTIONAL REGULATOR MRAZ"/>
    <property type="match status" value="1"/>
</dbReference>
<dbReference type="PANTHER" id="PTHR34701:SF1">
    <property type="entry name" value="TRANSCRIPTIONAL REGULATOR MRAZ"/>
    <property type="match status" value="1"/>
</dbReference>
<dbReference type="Pfam" id="PF02381">
    <property type="entry name" value="MraZ"/>
    <property type="match status" value="2"/>
</dbReference>
<dbReference type="SUPFAM" id="SSF89447">
    <property type="entry name" value="AbrB/MazE/MraZ-like"/>
    <property type="match status" value="1"/>
</dbReference>
<dbReference type="PROSITE" id="PS51740">
    <property type="entry name" value="SPOVT_ABRB"/>
    <property type="match status" value="2"/>
</dbReference>
<comment type="function">
    <text evidence="1">Negatively regulates its own expression and that of the subsequent genes in the proximal part of the division and cell wall (dcw) gene cluster. Acts by binding directly to DNA. May also regulate the expression of genes outside the dcw cluster.</text>
</comment>
<comment type="subunit">
    <text evidence="1">Forms oligomers.</text>
</comment>
<comment type="subcellular location">
    <subcellularLocation>
        <location evidence="1">Cytoplasm</location>
        <location evidence="1">Nucleoid</location>
    </subcellularLocation>
</comment>
<comment type="similarity">
    <text evidence="1">Belongs to the MraZ family.</text>
</comment>